<accession>Q5M1M3</accession>
<evidence type="ECO:0000255" key="1">
    <source>
        <dbReference type="HAMAP-Rule" id="MF_00294"/>
    </source>
</evidence>
<comment type="similarity">
    <text evidence="1">Belongs to the bacterial ribosomal protein bL33 family.</text>
</comment>
<name>RL331_STRT1</name>
<feature type="chain" id="PRO_0000356750" description="Large ribosomal subunit protein bL33A">
    <location>
        <begin position="1"/>
        <end position="50"/>
    </location>
</feature>
<organism>
    <name type="scientific">Streptococcus thermophilus (strain CNRZ 1066)</name>
    <dbReference type="NCBI Taxonomy" id="299768"/>
    <lineage>
        <taxon>Bacteria</taxon>
        <taxon>Bacillati</taxon>
        <taxon>Bacillota</taxon>
        <taxon>Bacilli</taxon>
        <taxon>Lactobacillales</taxon>
        <taxon>Streptococcaceae</taxon>
        <taxon>Streptococcus</taxon>
    </lineage>
</organism>
<reference key="1">
    <citation type="journal article" date="2004" name="Nat. Biotechnol.">
        <title>Complete sequence and comparative genome analysis of the dairy bacterium Streptococcus thermophilus.</title>
        <authorList>
            <person name="Bolotin A."/>
            <person name="Quinquis B."/>
            <person name="Renault P."/>
            <person name="Sorokin A."/>
            <person name="Ehrlich S.D."/>
            <person name="Kulakauskas S."/>
            <person name="Lapidus A."/>
            <person name="Goltsman E."/>
            <person name="Mazur M."/>
            <person name="Pusch G.D."/>
            <person name="Fonstein M."/>
            <person name="Overbeek R."/>
            <person name="Kyprides N."/>
            <person name="Purnelle B."/>
            <person name="Prozzi D."/>
            <person name="Ngui K."/>
            <person name="Masuy D."/>
            <person name="Hancy F."/>
            <person name="Burteau S."/>
            <person name="Boutry M."/>
            <person name="Delcour J."/>
            <person name="Goffeau A."/>
            <person name="Hols P."/>
        </authorList>
    </citation>
    <scope>NUCLEOTIDE SEQUENCE [LARGE SCALE GENOMIC DNA]</scope>
    <source>
        <strain>CNRZ 1066</strain>
    </source>
</reference>
<sequence length="50" mass="5651">MAQKKASLACADCGNRNYSISVSSTPKPTRLEVNKFCKNCKKYTLHKETR</sequence>
<proteinExistence type="inferred from homology"/>
<gene>
    <name evidence="1" type="primary">rpmG1</name>
    <name type="synonym">rpmGC</name>
    <name type="ordered locus">str0213</name>
</gene>
<protein>
    <recommendedName>
        <fullName evidence="1">Large ribosomal subunit protein bL33A</fullName>
    </recommendedName>
    <alternativeName>
        <fullName evidence="1">50S ribosomal protein L33 1</fullName>
    </alternativeName>
</protein>
<dbReference type="EMBL" id="CP000024">
    <property type="protein sequence ID" value="AAV61827.1"/>
    <property type="molecule type" value="Genomic_DNA"/>
</dbReference>
<dbReference type="SMR" id="Q5M1M3"/>
<dbReference type="KEGG" id="stc:str0213"/>
<dbReference type="HOGENOM" id="CLU_190949_0_1_9"/>
<dbReference type="GO" id="GO:0005737">
    <property type="term" value="C:cytoplasm"/>
    <property type="evidence" value="ECO:0007669"/>
    <property type="project" value="UniProtKB-ARBA"/>
</dbReference>
<dbReference type="GO" id="GO:1990904">
    <property type="term" value="C:ribonucleoprotein complex"/>
    <property type="evidence" value="ECO:0007669"/>
    <property type="project" value="UniProtKB-KW"/>
</dbReference>
<dbReference type="GO" id="GO:0005840">
    <property type="term" value="C:ribosome"/>
    <property type="evidence" value="ECO:0007669"/>
    <property type="project" value="UniProtKB-KW"/>
</dbReference>
<dbReference type="GO" id="GO:0003735">
    <property type="term" value="F:structural constituent of ribosome"/>
    <property type="evidence" value="ECO:0007669"/>
    <property type="project" value="InterPro"/>
</dbReference>
<dbReference type="GO" id="GO:0006412">
    <property type="term" value="P:translation"/>
    <property type="evidence" value="ECO:0007669"/>
    <property type="project" value="UniProtKB-UniRule"/>
</dbReference>
<dbReference type="Gene3D" id="2.20.28.120">
    <property type="entry name" value="Ribosomal protein L33"/>
    <property type="match status" value="1"/>
</dbReference>
<dbReference type="HAMAP" id="MF_00294">
    <property type="entry name" value="Ribosomal_bL33"/>
    <property type="match status" value="1"/>
</dbReference>
<dbReference type="InterPro" id="IPR001705">
    <property type="entry name" value="Ribosomal_bL33"/>
</dbReference>
<dbReference type="InterPro" id="IPR038584">
    <property type="entry name" value="Ribosomal_bL33_sf"/>
</dbReference>
<dbReference type="InterPro" id="IPR011332">
    <property type="entry name" value="Ribosomal_zn-bd"/>
</dbReference>
<dbReference type="NCBIfam" id="NF001764">
    <property type="entry name" value="PRK00504.1"/>
    <property type="match status" value="1"/>
</dbReference>
<dbReference type="NCBIfam" id="TIGR01023">
    <property type="entry name" value="rpmG_bact"/>
    <property type="match status" value="1"/>
</dbReference>
<dbReference type="Pfam" id="PF00471">
    <property type="entry name" value="Ribosomal_L33"/>
    <property type="match status" value="1"/>
</dbReference>
<dbReference type="SUPFAM" id="SSF57829">
    <property type="entry name" value="Zn-binding ribosomal proteins"/>
    <property type="match status" value="1"/>
</dbReference>
<keyword id="KW-0687">Ribonucleoprotein</keyword>
<keyword id="KW-0689">Ribosomal protein</keyword>